<name>RNY_OPITP</name>
<comment type="function">
    <text evidence="1">Endoribonuclease that initiates mRNA decay.</text>
</comment>
<comment type="subcellular location">
    <subcellularLocation>
        <location evidence="1">Cell membrane</location>
        <topology evidence="1">Single-pass membrane protein</topology>
    </subcellularLocation>
</comment>
<comment type="similarity">
    <text evidence="1">Belongs to the RNase Y family.</text>
</comment>
<gene>
    <name evidence="1" type="primary">rny</name>
    <name type="ordered locus">Oter_0283</name>
</gene>
<reference key="1">
    <citation type="journal article" date="2011" name="J. Bacteriol.">
        <title>Genome sequence of the verrucomicrobium Opitutus terrae PB90-1, an abundant inhabitant of rice paddy soil ecosystems.</title>
        <authorList>
            <person name="van Passel M.W."/>
            <person name="Kant R."/>
            <person name="Palva A."/>
            <person name="Copeland A."/>
            <person name="Lucas S."/>
            <person name="Lapidus A."/>
            <person name="Glavina del Rio T."/>
            <person name="Pitluck S."/>
            <person name="Goltsman E."/>
            <person name="Clum A."/>
            <person name="Sun H."/>
            <person name="Schmutz J."/>
            <person name="Larimer F.W."/>
            <person name="Land M.L."/>
            <person name="Hauser L."/>
            <person name="Kyrpides N."/>
            <person name="Mikhailova N."/>
            <person name="Richardson P.P."/>
            <person name="Janssen P.H."/>
            <person name="de Vos W.M."/>
            <person name="Smidt H."/>
        </authorList>
    </citation>
    <scope>NUCLEOTIDE SEQUENCE [LARGE SCALE GENOMIC DNA]</scope>
    <source>
        <strain>DSM 11246 / JCM 15787 / PB90-1</strain>
    </source>
</reference>
<dbReference type="EC" id="3.1.-.-" evidence="1"/>
<dbReference type="EMBL" id="CP001032">
    <property type="protein sequence ID" value="ACB73573.1"/>
    <property type="molecule type" value="Genomic_DNA"/>
</dbReference>
<dbReference type="RefSeq" id="WP_012373111.1">
    <property type="nucleotide sequence ID" value="NC_010571.1"/>
</dbReference>
<dbReference type="SMR" id="B1ZQ93"/>
<dbReference type="STRING" id="452637.Oter_0283"/>
<dbReference type="KEGG" id="ote:Oter_0283"/>
<dbReference type="eggNOG" id="COG1418">
    <property type="taxonomic scope" value="Bacteria"/>
</dbReference>
<dbReference type="HOGENOM" id="CLU_028328_1_0_0"/>
<dbReference type="OrthoDB" id="9803205at2"/>
<dbReference type="Proteomes" id="UP000007013">
    <property type="component" value="Chromosome"/>
</dbReference>
<dbReference type="GO" id="GO:0005886">
    <property type="term" value="C:plasma membrane"/>
    <property type="evidence" value="ECO:0007669"/>
    <property type="project" value="UniProtKB-SubCell"/>
</dbReference>
<dbReference type="GO" id="GO:0003723">
    <property type="term" value="F:RNA binding"/>
    <property type="evidence" value="ECO:0007669"/>
    <property type="project" value="UniProtKB-UniRule"/>
</dbReference>
<dbReference type="GO" id="GO:0004521">
    <property type="term" value="F:RNA endonuclease activity"/>
    <property type="evidence" value="ECO:0007669"/>
    <property type="project" value="UniProtKB-UniRule"/>
</dbReference>
<dbReference type="GO" id="GO:0006402">
    <property type="term" value="P:mRNA catabolic process"/>
    <property type="evidence" value="ECO:0007669"/>
    <property type="project" value="UniProtKB-UniRule"/>
</dbReference>
<dbReference type="CDD" id="cd00077">
    <property type="entry name" value="HDc"/>
    <property type="match status" value="1"/>
</dbReference>
<dbReference type="CDD" id="cd22431">
    <property type="entry name" value="KH-I_RNaseY"/>
    <property type="match status" value="1"/>
</dbReference>
<dbReference type="Gene3D" id="1.10.3210.10">
    <property type="entry name" value="Hypothetical protein af1432"/>
    <property type="match status" value="1"/>
</dbReference>
<dbReference type="Gene3D" id="3.30.1370.10">
    <property type="entry name" value="K Homology domain, type 1"/>
    <property type="match status" value="1"/>
</dbReference>
<dbReference type="HAMAP" id="MF_00335">
    <property type="entry name" value="RNase_Y"/>
    <property type="match status" value="1"/>
</dbReference>
<dbReference type="InterPro" id="IPR003607">
    <property type="entry name" value="HD/PDEase_dom"/>
</dbReference>
<dbReference type="InterPro" id="IPR006674">
    <property type="entry name" value="HD_domain"/>
</dbReference>
<dbReference type="InterPro" id="IPR006675">
    <property type="entry name" value="HDIG_dom"/>
</dbReference>
<dbReference type="InterPro" id="IPR004087">
    <property type="entry name" value="KH_dom"/>
</dbReference>
<dbReference type="InterPro" id="IPR004088">
    <property type="entry name" value="KH_dom_type_1"/>
</dbReference>
<dbReference type="InterPro" id="IPR036612">
    <property type="entry name" value="KH_dom_type_1_sf"/>
</dbReference>
<dbReference type="InterPro" id="IPR017705">
    <property type="entry name" value="Ribonuclease_Y"/>
</dbReference>
<dbReference type="InterPro" id="IPR022711">
    <property type="entry name" value="RNase_Y_N"/>
</dbReference>
<dbReference type="NCBIfam" id="TIGR00277">
    <property type="entry name" value="HDIG"/>
    <property type="match status" value="1"/>
</dbReference>
<dbReference type="NCBIfam" id="TIGR03319">
    <property type="entry name" value="RNase_Y"/>
    <property type="match status" value="1"/>
</dbReference>
<dbReference type="PANTHER" id="PTHR12826">
    <property type="entry name" value="RIBONUCLEASE Y"/>
    <property type="match status" value="1"/>
</dbReference>
<dbReference type="PANTHER" id="PTHR12826:SF15">
    <property type="entry name" value="RIBONUCLEASE Y"/>
    <property type="match status" value="1"/>
</dbReference>
<dbReference type="Pfam" id="PF01966">
    <property type="entry name" value="HD"/>
    <property type="match status" value="1"/>
</dbReference>
<dbReference type="Pfam" id="PF00013">
    <property type="entry name" value="KH_1"/>
    <property type="match status" value="1"/>
</dbReference>
<dbReference type="Pfam" id="PF12072">
    <property type="entry name" value="RNase_Y_N"/>
    <property type="match status" value="1"/>
</dbReference>
<dbReference type="SMART" id="SM00471">
    <property type="entry name" value="HDc"/>
    <property type="match status" value="1"/>
</dbReference>
<dbReference type="SMART" id="SM00322">
    <property type="entry name" value="KH"/>
    <property type="match status" value="1"/>
</dbReference>
<dbReference type="SUPFAM" id="SSF54791">
    <property type="entry name" value="Eukaryotic type KH-domain (KH-domain type I)"/>
    <property type="match status" value="1"/>
</dbReference>
<dbReference type="SUPFAM" id="SSF109604">
    <property type="entry name" value="HD-domain/PDEase-like"/>
    <property type="match status" value="1"/>
</dbReference>
<dbReference type="PROSITE" id="PS51831">
    <property type="entry name" value="HD"/>
    <property type="match status" value="1"/>
</dbReference>
<dbReference type="PROSITE" id="PS50084">
    <property type="entry name" value="KH_TYPE_1"/>
    <property type="match status" value="1"/>
</dbReference>
<feature type="chain" id="PRO_0000344914" description="Ribonuclease Y">
    <location>
        <begin position="1"/>
        <end position="523"/>
    </location>
</feature>
<feature type="transmembrane region" description="Helical" evidence="1">
    <location>
        <begin position="18"/>
        <end position="38"/>
    </location>
</feature>
<feature type="domain" description="KH" evidence="1">
    <location>
        <begin position="213"/>
        <end position="276"/>
    </location>
</feature>
<feature type="domain" description="HD" evidence="2">
    <location>
        <begin position="339"/>
        <end position="432"/>
    </location>
</feature>
<accession>B1ZQ93</accession>
<organism>
    <name type="scientific">Opitutus terrae (strain DSM 11246 / JCM 15787 / PB90-1)</name>
    <dbReference type="NCBI Taxonomy" id="452637"/>
    <lineage>
        <taxon>Bacteria</taxon>
        <taxon>Pseudomonadati</taxon>
        <taxon>Verrucomicrobiota</taxon>
        <taxon>Opitutia</taxon>
        <taxon>Opitutales</taxon>
        <taxon>Opitutaceae</taxon>
        <taxon>Opitutus</taxon>
    </lineage>
</organism>
<keyword id="KW-1003">Cell membrane</keyword>
<keyword id="KW-0255">Endonuclease</keyword>
<keyword id="KW-0378">Hydrolase</keyword>
<keyword id="KW-0472">Membrane</keyword>
<keyword id="KW-0540">Nuclease</keyword>
<keyword id="KW-1185">Reference proteome</keyword>
<keyword id="KW-0694">RNA-binding</keyword>
<keyword id="KW-0812">Transmembrane</keyword>
<keyword id="KW-1133">Transmembrane helix</keyword>
<proteinExistence type="inferred from homology"/>
<protein>
    <recommendedName>
        <fullName evidence="1">Ribonuclease Y</fullName>
        <shortName evidence="1">RNase Y</shortName>
        <ecNumber evidence="1">3.1.-.-</ecNumber>
    </recommendedName>
</protein>
<evidence type="ECO:0000255" key="1">
    <source>
        <dbReference type="HAMAP-Rule" id="MF_00335"/>
    </source>
</evidence>
<evidence type="ECO:0000255" key="2">
    <source>
        <dbReference type="PROSITE-ProRule" id="PRU01175"/>
    </source>
</evidence>
<sequence length="523" mass="58673">MSAADFAFLIAESDLFDWSLTVALVIGGALGFLVVWAFTRHTRRMAHEQAAELEEVARREAAVAAEEIRQKAEAEIQEKRAELNRDFDRREIESEVRLREIRAHEESLALLDYQLEQRQERLNRETAAMRQARDAIRALSKSVRQRLEGVSQMDAESIRQALREEVQLECQDELRALRREIMEKSEQDLQTEGRRIMIAAMQRLASKPNNDLTSTIVSLPNEDMKGRIIGREGRNIKAFEAATGVTVLIDESPQTVLISSFDPIRREVARGALEALIKDGRIHPATIEEFVKRAHEEIELSAMQAGEDAVTRLNINGLHPEIIKLLGKLKFRFSYNQNVLDHSVETASLASMIASEVGLDPNVAKRAGLLHDIGKAVNADYEGSHAHIGAEFIRRYGETPIVVNSVAAHHEEVKPETVYAGLVILADTISATRPGARAESMAGYIQRLGRLEKLAMAIDGVQQAFAIQAGREIRVVVSPQTVTDDRAREIAKELRKRIEAELQYPSTIKITVIREQRFTETAT</sequence>